<accession>B1A981</accession>
<protein>
    <recommendedName>
        <fullName>NAD(P)H-quinone oxidoreductase subunit 5, chloroplastic</fullName>
        <ecNumber>7.1.1.-</ecNumber>
    </recommendedName>
    <alternativeName>
        <fullName>NAD(P)H dehydrogenase subunit 5</fullName>
    </alternativeName>
    <alternativeName>
        <fullName>NADH-plastoquinone oxidoreductase subunit 5</fullName>
    </alternativeName>
</protein>
<evidence type="ECO:0000250" key="1"/>
<evidence type="ECO:0000255" key="2"/>
<evidence type="ECO:0000305" key="3"/>
<reference key="1">
    <citation type="journal article" date="2008" name="Nature">
        <title>The draft genome of the transgenic tropical fruit tree papaya (Carica papaya Linnaeus).</title>
        <authorList>
            <person name="Ming R."/>
            <person name="Hou S."/>
            <person name="Feng Y."/>
            <person name="Yu Q."/>
            <person name="Dionne-Laporte A."/>
            <person name="Saw J.H."/>
            <person name="Senin P."/>
            <person name="Wang W."/>
            <person name="Ly B.V."/>
            <person name="Lewis K.L."/>
            <person name="Salzberg S.L."/>
            <person name="Feng L."/>
            <person name="Jones M.R."/>
            <person name="Skelton R.L."/>
            <person name="Murray J.E."/>
            <person name="Chen C."/>
            <person name="Qian W."/>
            <person name="Shen J."/>
            <person name="Du P."/>
            <person name="Eustice M."/>
            <person name="Tong E."/>
            <person name="Tang H."/>
            <person name="Lyons E."/>
            <person name="Paull R.E."/>
            <person name="Michael T.P."/>
            <person name="Wall K."/>
            <person name="Rice D.W."/>
            <person name="Albert H."/>
            <person name="Wang M.L."/>
            <person name="Zhu Y.J."/>
            <person name="Schatz M."/>
            <person name="Nagarajan N."/>
            <person name="Acob R.A."/>
            <person name="Guan P."/>
            <person name="Blas A."/>
            <person name="Wai C.M."/>
            <person name="Ackerman C.M."/>
            <person name="Ren Y."/>
            <person name="Liu C."/>
            <person name="Wang J."/>
            <person name="Wang J."/>
            <person name="Na J.K."/>
            <person name="Shakirov E.V."/>
            <person name="Haas B."/>
            <person name="Thimmapuram J."/>
            <person name="Nelson D."/>
            <person name="Wang X."/>
            <person name="Bowers J.E."/>
            <person name="Gschwend A.R."/>
            <person name="Delcher A.L."/>
            <person name="Singh R."/>
            <person name="Suzuki J.Y."/>
            <person name="Tripathi S."/>
            <person name="Neupane K."/>
            <person name="Wei H."/>
            <person name="Irikura B."/>
            <person name="Paidi M."/>
            <person name="Jiang N."/>
            <person name="Zhang W."/>
            <person name="Presting G."/>
            <person name="Windsor A."/>
            <person name="Navajas-Perez R."/>
            <person name="Torres M.J."/>
            <person name="Feltus F.A."/>
            <person name="Porter B."/>
            <person name="Li Y."/>
            <person name="Burroughs A.M."/>
            <person name="Luo M.C."/>
            <person name="Liu L."/>
            <person name="Christopher D.A."/>
            <person name="Mount S.M."/>
            <person name="Moore P.H."/>
            <person name="Sugimura T."/>
            <person name="Jiang J."/>
            <person name="Schuler M.A."/>
            <person name="Friedman V."/>
            <person name="Mitchell-Olds T."/>
            <person name="Shippen D.E."/>
            <person name="dePamphilis C.W."/>
            <person name="Palmer J.D."/>
            <person name="Freeling M."/>
            <person name="Paterson A.H."/>
            <person name="Gonsalves D."/>
            <person name="Wang L."/>
            <person name="Alam M."/>
        </authorList>
    </citation>
    <scope>NUCLEOTIDE SEQUENCE [LARGE SCALE GENOMIC DNA]</scope>
    <source>
        <strain>cv. SunUp</strain>
    </source>
</reference>
<comment type="function">
    <text evidence="1">NDH shuttles electrons from NAD(P)H:plastoquinone, via FMN and iron-sulfur (Fe-S) centers, to quinones in the photosynthetic chain and possibly in a chloroplast respiratory chain. The immediate electron acceptor for the enzyme in this species is believed to be plastoquinone. Couples the redox reaction to proton translocation, and thus conserves the redox energy in a proton gradient (By similarity).</text>
</comment>
<comment type="catalytic activity">
    <reaction>
        <text>a plastoquinone + NADH + (n+1) H(+)(in) = a plastoquinol + NAD(+) + n H(+)(out)</text>
        <dbReference type="Rhea" id="RHEA:42608"/>
        <dbReference type="Rhea" id="RHEA-COMP:9561"/>
        <dbReference type="Rhea" id="RHEA-COMP:9562"/>
        <dbReference type="ChEBI" id="CHEBI:15378"/>
        <dbReference type="ChEBI" id="CHEBI:17757"/>
        <dbReference type="ChEBI" id="CHEBI:57540"/>
        <dbReference type="ChEBI" id="CHEBI:57945"/>
        <dbReference type="ChEBI" id="CHEBI:62192"/>
    </reaction>
</comment>
<comment type="catalytic activity">
    <reaction>
        <text>a plastoquinone + NADPH + (n+1) H(+)(in) = a plastoquinol + NADP(+) + n H(+)(out)</text>
        <dbReference type="Rhea" id="RHEA:42612"/>
        <dbReference type="Rhea" id="RHEA-COMP:9561"/>
        <dbReference type="Rhea" id="RHEA-COMP:9562"/>
        <dbReference type="ChEBI" id="CHEBI:15378"/>
        <dbReference type="ChEBI" id="CHEBI:17757"/>
        <dbReference type="ChEBI" id="CHEBI:57783"/>
        <dbReference type="ChEBI" id="CHEBI:58349"/>
        <dbReference type="ChEBI" id="CHEBI:62192"/>
    </reaction>
</comment>
<comment type="subunit">
    <text evidence="1">NDH is composed of at least 16 different subunits, 5 of which are encoded in the nucleus.</text>
</comment>
<comment type="subcellular location">
    <subcellularLocation>
        <location evidence="1">Plastid</location>
        <location evidence="1">Chloroplast thylakoid membrane</location>
        <topology evidence="1">Multi-pass membrane protein</topology>
    </subcellularLocation>
</comment>
<comment type="similarity">
    <text evidence="3">Belongs to the complex I subunit 5 family.</text>
</comment>
<dbReference type="EC" id="7.1.1.-"/>
<dbReference type="EMBL" id="EU431223">
    <property type="protein sequence ID" value="ABY86840.1"/>
    <property type="molecule type" value="Genomic_DNA"/>
</dbReference>
<dbReference type="RefSeq" id="YP_001671729.1">
    <property type="nucleotide sequence ID" value="NC_010323.1"/>
</dbReference>
<dbReference type="SMR" id="B1A981"/>
<dbReference type="GeneID" id="5878394"/>
<dbReference type="KEGG" id="cpap:5878394"/>
<dbReference type="OrthoDB" id="988028at2759"/>
<dbReference type="GO" id="GO:0009535">
    <property type="term" value="C:chloroplast thylakoid membrane"/>
    <property type="evidence" value="ECO:0007669"/>
    <property type="project" value="UniProtKB-SubCell"/>
</dbReference>
<dbReference type="GO" id="GO:0008137">
    <property type="term" value="F:NADH dehydrogenase (ubiquinone) activity"/>
    <property type="evidence" value="ECO:0007669"/>
    <property type="project" value="InterPro"/>
</dbReference>
<dbReference type="GO" id="GO:0048038">
    <property type="term" value="F:quinone binding"/>
    <property type="evidence" value="ECO:0007669"/>
    <property type="project" value="UniProtKB-KW"/>
</dbReference>
<dbReference type="GO" id="GO:0042773">
    <property type="term" value="P:ATP synthesis coupled electron transport"/>
    <property type="evidence" value="ECO:0007669"/>
    <property type="project" value="InterPro"/>
</dbReference>
<dbReference type="GO" id="GO:0015990">
    <property type="term" value="P:electron transport coupled proton transport"/>
    <property type="evidence" value="ECO:0007669"/>
    <property type="project" value="TreeGrafter"/>
</dbReference>
<dbReference type="Gene3D" id="1.20.5.2700">
    <property type="match status" value="1"/>
</dbReference>
<dbReference type="InterPro" id="IPR002128">
    <property type="entry name" value="NADH_UbQ_OxRdtase_chlpt_su5_C"/>
</dbReference>
<dbReference type="InterPro" id="IPR018393">
    <property type="entry name" value="NADHpl_OxRdtase_5_subgr"/>
</dbReference>
<dbReference type="InterPro" id="IPR001750">
    <property type="entry name" value="ND/Mrp_TM"/>
</dbReference>
<dbReference type="InterPro" id="IPR003945">
    <property type="entry name" value="NU5C-like"/>
</dbReference>
<dbReference type="InterPro" id="IPR001516">
    <property type="entry name" value="Proton_antipo_N"/>
</dbReference>
<dbReference type="NCBIfam" id="TIGR01974">
    <property type="entry name" value="NDH_I_L"/>
    <property type="match status" value="1"/>
</dbReference>
<dbReference type="NCBIfam" id="NF005141">
    <property type="entry name" value="PRK06590.1"/>
    <property type="match status" value="1"/>
</dbReference>
<dbReference type="PANTHER" id="PTHR42829">
    <property type="entry name" value="NADH-UBIQUINONE OXIDOREDUCTASE CHAIN 5"/>
    <property type="match status" value="1"/>
</dbReference>
<dbReference type="PANTHER" id="PTHR42829:SF2">
    <property type="entry name" value="NADH-UBIQUINONE OXIDOREDUCTASE CHAIN 5"/>
    <property type="match status" value="1"/>
</dbReference>
<dbReference type="Pfam" id="PF01010">
    <property type="entry name" value="Proton_antipo_C"/>
    <property type="match status" value="1"/>
</dbReference>
<dbReference type="Pfam" id="PF00361">
    <property type="entry name" value="Proton_antipo_M"/>
    <property type="match status" value="1"/>
</dbReference>
<dbReference type="Pfam" id="PF00662">
    <property type="entry name" value="Proton_antipo_N"/>
    <property type="match status" value="1"/>
</dbReference>
<dbReference type="PRINTS" id="PR01434">
    <property type="entry name" value="NADHDHGNASE5"/>
</dbReference>
<dbReference type="PRINTS" id="PR01435">
    <property type="entry name" value="NPOXDRDTASE5"/>
</dbReference>
<name>NU5C_CARPA</name>
<proteinExistence type="inferred from homology"/>
<keyword id="KW-0150">Chloroplast</keyword>
<keyword id="KW-0472">Membrane</keyword>
<keyword id="KW-0520">NAD</keyword>
<keyword id="KW-0521">NADP</keyword>
<keyword id="KW-0934">Plastid</keyword>
<keyword id="KW-0618">Plastoquinone</keyword>
<keyword id="KW-0874">Quinone</keyword>
<keyword id="KW-0793">Thylakoid</keyword>
<keyword id="KW-1278">Translocase</keyword>
<keyword id="KW-0812">Transmembrane</keyword>
<keyword id="KW-1133">Transmembrane helix</keyword>
<keyword id="KW-0813">Transport</keyword>
<geneLocation type="chloroplast"/>
<sequence length="746" mass="84603">MEHIYQYSWMIPFIPLPVPILLGMGLLLFPTATKNLRRMWAFLSIFLLSIVMIFSIDLSIQQITGSSAYQYVWSWTINNEFSFEFGNLIDPLTSIMSILITTVGILVLIYSDSYMSHDQGYLRFFAYMSFFNTSMLGLVTSSNLIQVYIFWELVGMCSYLLIGFWFTRPIAANACQKAFVTNRVGDFGLLLGILGLYWITGSFEFQDLFEIFNNLIYNNQVHFLFVTLCAFLLFAGPVAKSAQFPLHVWLPDAMEGPTPISALIHAATMVAAGIFLVARLLPLFIGIPYIMYLISLIGIITVLLGATLALAQKDIKRGLAYSTMSQLGYMMLALGMGSYRAALFHLITHAYSKALLFLGSGSIIHSMEAVVGYSPVKSQNMVLMGGLTKHVPITKTTFLLGTLSLCGIPPLACFWSKDEILNDSWLYSPIFAVIACSTAGLTAFYMFRIYLLTFDGHLNIHFQNYSGKKSSSFYSISIWGKEEAKPINRNFCLVPLLTMNNNERATFFWKKAYQIGSNVRNRTFLSIPHFAVKTTFSYPHESDNTILFPMLILVLFTLFVGAIGIPFNQEGIDFDILSKLLTPSINLLHQNSNDFVDWYEFFKNATFSVSIAFFGIFIAFFLYKPAYSSLQNLNLLNSFAKRGPKRILWDKIINFIYDWSYNRGYIDTFYTISLTGGIRGLAELTHFFDRRVIDGITNGVGITSFFIGEGIKYVGGSRISSYLLLYLFYVLIFLFIYYFLNLLNFF</sequence>
<feature type="chain" id="PRO_0000360917" description="NAD(P)H-quinone oxidoreductase subunit 5, chloroplastic">
    <location>
        <begin position="1"/>
        <end position="746"/>
    </location>
</feature>
<feature type="transmembrane region" description="Helical" evidence="2">
    <location>
        <begin position="9"/>
        <end position="29"/>
    </location>
</feature>
<feature type="transmembrane region" description="Helical" evidence="2">
    <location>
        <begin position="40"/>
        <end position="60"/>
    </location>
</feature>
<feature type="transmembrane region" description="Helical" evidence="2">
    <location>
        <begin position="89"/>
        <end position="109"/>
    </location>
</feature>
<feature type="transmembrane region" description="Helical" evidence="2">
    <location>
        <begin position="125"/>
        <end position="145"/>
    </location>
</feature>
<feature type="transmembrane region" description="Helical" evidence="2">
    <location>
        <begin position="147"/>
        <end position="167"/>
    </location>
</feature>
<feature type="transmembrane region" description="Helical" evidence="2">
    <location>
        <begin position="185"/>
        <end position="205"/>
    </location>
</feature>
<feature type="transmembrane region" description="Helical" evidence="2">
    <location>
        <begin position="219"/>
        <end position="239"/>
    </location>
</feature>
<feature type="transmembrane region" description="Helical" evidence="2">
    <location>
        <begin position="258"/>
        <end position="278"/>
    </location>
</feature>
<feature type="transmembrane region" description="Helical" evidence="2">
    <location>
        <begin position="280"/>
        <end position="300"/>
    </location>
</feature>
<feature type="transmembrane region" description="Helical" evidence="2">
    <location>
        <begin position="327"/>
        <end position="347"/>
    </location>
</feature>
<feature type="transmembrane region" description="Helical" evidence="2">
    <location>
        <begin position="354"/>
        <end position="374"/>
    </location>
</feature>
<feature type="transmembrane region" description="Helical" evidence="2">
    <location>
        <begin position="396"/>
        <end position="416"/>
    </location>
</feature>
<feature type="transmembrane region" description="Helical" evidence="2">
    <location>
        <begin position="425"/>
        <end position="445"/>
    </location>
</feature>
<feature type="transmembrane region" description="Helical" evidence="2">
    <location>
        <begin position="546"/>
        <end position="566"/>
    </location>
</feature>
<feature type="transmembrane region" description="Helical" evidence="2">
    <location>
        <begin position="607"/>
        <end position="627"/>
    </location>
</feature>
<feature type="transmembrane region" description="Helical" evidence="2">
    <location>
        <begin position="723"/>
        <end position="743"/>
    </location>
</feature>
<gene>
    <name type="primary">ndhF</name>
</gene>
<organism>
    <name type="scientific">Carica papaya</name>
    <name type="common">Papaya</name>
    <dbReference type="NCBI Taxonomy" id="3649"/>
    <lineage>
        <taxon>Eukaryota</taxon>
        <taxon>Viridiplantae</taxon>
        <taxon>Streptophyta</taxon>
        <taxon>Embryophyta</taxon>
        <taxon>Tracheophyta</taxon>
        <taxon>Spermatophyta</taxon>
        <taxon>Magnoliopsida</taxon>
        <taxon>eudicotyledons</taxon>
        <taxon>Gunneridae</taxon>
        <taxon>Pentapetalae</taxon>
        <taxon>rosids</taxon>
        <taxon>malvids</taxon>
        <taxon>Brassicales</taxon>
        <taxon>Caricaceae</taxon>
        <taxon>Carica</taxon>
    </lineage>
</organism>